<name>Y2786_FLAJ1</name>
<comment type="similarity">
    <text evidence="1">Belongs to the UPF0173 family.</text>
</comment>
<sequence length="225" mass="24756">MKITFYGHASLAIEVGGKHIIVDPFITGNPQAAAIDINTLKADYILLTHAHGDHVLDVETIAKNTNAVIVSNAEITSYYAKKGFNSHPMNHGGSWKFDFGKVKYVNAIHSSSFPDGTYGGNPGGFVIEGEHKNIYIAGDTALTYDMKLIPLRTKLDLAILPIGNNFTMDVEDAIIASDFIECDKILGYHFDTFGYIEINHEESIKKFFDKGKDLMLLAIGESIEL</sequence>
<keyword id="KW-0378">Hydrolase</keyword>
<proteinExistence type="inferred from homology"/>
<dbReference type="EMBL" id="CP000685">
    <property type="protein sequence ID" value="ABQ05808.1"/>
    <property type="molecule type" value="Genomic_DNA"/>
</dbReference>
<dbReference type="RefSeq" id="WP_012024847.1">
    <property type="nucleotide sequence ID" value="NC_009441.1"/>
</dbReference>
<dbReference type="SMR" id="A5FG55"/>
<dbReference type="STRING" id="376686.Fjoh_2786"/>
<dbReference type="KEGG" id="fjo:Fjoh_2786"/>
<dbReference type="eggNOG" id="COG2220">
    <property type="taxonomic scope" value="Bacteria"/>
</dbReference>
<dbReference type="HOGENOM" id="CLU_070010_4_1_10"/>
<dbReference type="OrthoDB" id="9789133at2"/>
<dbReference type="Proteomes" id="UP000006694">
    <property type="component" value="Chromosome"/>
</dbReference>
<dbReference type="GO" id="GO:0016787">
    <property type="term" value="F:hydrolase activity"/>
    <property type="evidence" value="ECO:0007669"/>
    <property type="project" value="UniProtKB-UniRule"/>
</dbReference>
<dbReference type="Gene3D" id="3.60.15.10">
    <property type="entry name" value="Ribonuclease Z/Hydroxyacylglutathione hydrolase-like"/>
    <property type="match status" value="1"/>
</dbReference>
<dbReference type="HAMAP" id="MF_00457">
    <property type="entry name" value="UPF0173"/>
    <property type="match status" value="1"/>
</dbReference>
<dbReference type="InterPro" id="IPR001279">
    <property type="entry name" value="Metallo-B-lactamas"/>
</dbReference>
<dbReference type="InterPro" id="IPR036866">
    <property type="entry name" value="RibonucZ/Hydroxyglut_hydro"/>
</dbReference>
<dbReference type="InterPro" id="IPR022877">
    <property type="entry name" value="UPF0173"/>
</dbReference>
<dbReference type="InterPro" id="IPR050114">
    <property type="entry name" value="UPF0173_UPF0282_UlaG_hydrolase"/>
</dbReference>
<dbReference type="NCBIfam" id="NF001911">
    <property type="entry name" value="PRK00685.1"/>
    <property type="match status" value="1"/>
</dbReference>
<dbReference type="PANTHER" id="PTHR43546:SF3">
    <property type="entry name" value="UPF0173 METAL-DEPENDENT HYDROLASE MJ1163"/>
    <property type="match status" value="1"/>
</dbReference>
<dbReference type="PANTHER" id="PTHR43546">
    <property type="entry name" value="UPF0173 METAL-DEPENDENT HYDROLASE MJ1163-RELATED"/>
    <property type="match status" value="1"/>
</dbReference>
<dbReference type="Pfam" id="PF13483">
    <property type="entry name" value="Lactamase_B_3"/>
    <property type="match status" value="1"/>
</dbReference>
<dbReference type="SMART" id="SM00849">
    <property type="entry name" value="Lactamase_B"/>
    <property type="match status" value="1"/>
</dbReference>
<dbReference type="SUPFAM" id="SSF56281">
    <property type="entry name" value="Metallo-hydrolase/oxidoreductase"/>
    <property type="match status" value="1"/>
</dbReference>
<feature type="chain" id="PRO_0000367181" description="UPF0173 metal-dependent hydrolase Fjoh_2786">
    <location>
        <begin position="1"/>
        <end position="225"/>
    </location>
</feature>
<gene>
    <name type="ordered locus">Fjoh_2786</name>
</gene>
<evidence type="ECO:0000255" key="1">
    <source>
        <dbReference type="HAMAP-Rule" id="MF_00457"/>
    </source>
</evidence>
<accession>A5FG55</accession>
<organism>
    <name type="scientific">Flavobacterium johnsoniae (strain ATCC 17061 / DSM 2064 / JCM 8514 / BCRC 14874 / CCUG 350202 / NBRC 14942 / NCIMB 11054 / UW101)</name>
    <name type="common">Cytophaga johnsonae</name>
    <dbReference type="NCBI Taxonomy" id="376686"/>
    <lineage>
        <taxon>Bacteria</taxon>
        <taxon>Pseudomonadati</taxon>
        <taxon>Bacteroidota</taxon>
        <taxon>Flavobacteriia</taxon>
        <taxon>Flavobacteriales</taxon>
        <taxon>Flavobacteriaceae</taxon>
        <taxon>Flavobacterium</taxon>
    </lineage>
</organism>
<protein>
    <recommendedName>
        <fullName evidence="1">UPF0173 metal-dependent hydrolase Fjoh_2786</fullName>
    </recommendedName>
</protein>
<reference key="1">
    <citation type="journal article" date="2009" name="Appl. Environ. Microbiol.">
        <title>Novel features of the polysaccharide-digesting gliding bacterium Flavobacterium johnsoniae as revealed by genome sequence analysis.</title>
        <authorList>
            <person name="McBride M.J."/>
            <person name="Xie G."/>
            <person name="Martens E.C."/>
            <person name="Lapidus A."/>
            <person name="Henrissat B."/>
            <person name="Rhodes R.G."/>
            <person name="Goltsman E."/>
            <person name="Wang W."/>
            <person name="Xu J."/>
            <person name="Hunnicutt D.W."/>
            <person name="Staroscik A.M."/>
            <person name="Hoover T.R."/>
            <person name="Cheng Y.Q."/>
            <person name="Stein J.L."/>
        </authorList>
    </citation>
    <scope>NUCLEOTIDE SEQUENCE [LARGE SCALE GENOMIC DNA]</scope>
    <source>
        <strain>ATCC 17061 / DSM 2064 / JCM 8514 / BCRC 14874 / CCUG 350202 / NBRC 14942 / NCIMB 11054 / UW101</strain>
    </source>
</reference>